<keyword id="KW-0067">ATP-binding</keyword>
<keyword id="KW-0460">Magnesium</keyword>
<keyword id="KW-0547">Nucleotide-binding</keyword>
<keyword id="KW-1185">Reference proteome</keyword>
<keyword id="KW-0808">Transferase</keyword>
<keyword id="KW-0819">tRNA processing</keyword>
<sequence length="300" mass="34694">METQDHTLYVLLGPTGVGKTDLSLDIAERLGSPIISADSRQIFRELPIGTAAPTPEQRAKVPHLFVGTHSVRDYYSAGMYEVEVLEALKELFRKYRGVLLTGGSMMYIDAVCRGIDDIPDPFPEVREELYARYAAEGLDGILAQLRLLDPDYYAKVDRRNYKRVIHGLEICLSTGRPFSSFHRHEAKERPFRIVKIGLYREREELCKRIDARVLEMMEQGLEEEARAVYPLRHLNALNTVGYKEMFEYFDGSIDRAEAVRRIQRNSRVYARKQMTWFRRDSTIRWFHPEADKGTVLTLVT</sequence>
<comment type="function">
    <text evidence="1">Catalyzes the transfer of a dimethylallyl group onto the adenine at position 37 in tRNAs that read codons beginning with uridine, leading to the formation of N6-(dimethylallyl)adenosine (i(6)A).</text>
</comment>
<comment type="catalytic activity">
    <reaction evidence="1">
        <text>adenosine(37) in tRNA + dimethylallyl diphosphate = N(6)-dimethylallyladenosine(37) in tRNA + diphosphate</text>
        <dbReference type="Rhea" id="RHEA:26482"/>
        <dbReference type="Rhea" id="RHEA-COMP:10162"/>
        <dbReference type="Rhea" id="RHEA-COMP:10375"/>
        <dbReference type="ChEBI" id="CHEBI:33019"/>
        <dbReference type="ChEBI" id="CHEBI:57623"/>
        <dbReference type="ChEBI" id="CHEBI:74411"/>
        <dbReference type="ChEBI" id="CHEBI:74415"/>
        <dbReference type="EC" id="2.5.1.75"/>
    </reaction>
</comment>
<comment type="cofactor">
    <cofactor evidence="1">
        <name>Mg(2+)</name>
        <dbReference type="ChEBI" id="CHEBI:18420"/>
    </cofactor>
</comment>
<comment type="subunit">
    <text evidence="1">Monomer.</text>
</comment>
<comment type="similarity">
    <text evidence="1">Belongs to the IPP transferase family.</text>
</comment>
<dbReference type="EC" id="2.5.1.75" evidence="1"/>
<dbReference type="EMBL" id="AE015924">
    <property type="protein sequence ID" value="AAQ65548.1"/>
    <property type="molecule type" value="Genomic_DNA"/>
</dbReference>
<dbReference type="RefSeq" id="WP_005874242.1">
    <property type="nucleotide sequence ID" value="NC_002950.2"/>
</dbReference>
<dbReference type="SMR" id="Q7MAW8"/>
<dbReference type="STRING" id="242619.PG_0335"/>
<dbReference type="EnsemblBacteria" id="AAQ65548">
    <property type="protein sequence ID" value="AAQ65548"/>
    <property type="gene ID" value="PG_0335"/>
</dbReference>
<dbReference type="KEGG" id="pgi:PG_0335"/>
<dbReference type="PATRIC" id="fig|242619.8.peg.309"/>
<dbReference type="eggNOG" id="COG0324">
    <property type="taxonomic scope" value="Bacteria"/>
</dbReference>
<dbReference type="HOGENOM" id="CLU_032616_0_1_10"/>
<dbReference type="BioCyc" id="PGIN242619:G1G02-315-MONOMER"/>
<dbReference type="Proteomes" id="UP000000588">
    <property type="component" value="Chromosome"/>
</dbReference>
<dbReference type="GO" id="GO:0005524">
    <property type="term" value="F:ATP binding"/>
    <property type="evidence" value="ECO:0007669"/>
    <property type="project" value="UniProtKB-UniRule"/>
</dbReference>
<dbReference type="GO" id="GO:0052381">
    <property type="term" value="F:tRNA dimethylallyltransferase activity"/>
    <property type="evidence" value="ECO:0007669"/>
    <property type="project" value="UniProtKB-UniRule"/>
</dbReference>
<dbReference type="GO" id="GO:0006400">
    <property type="term" value="P:tRNA modification"/>
    <property type="evidence" value="ECO:0007669"/>
    <property type="project" value="TreeGrafter"/>
</dbReference>
<dbReference type="Gene3D" id="1.10.20.140">
    <property type="match status" value="1"/>
</dbReference>
<dbReference type="Gene3D" id="3.40.50.300">
    <property type="entry name" value="P-loop containing nucleotide triphosphate hydrolases"/>
    <property type="match status" value="1"/>
</dbReference>
<dbReference type="HAMAP" id="MF_00185">
    <property type="entry name" value="IPP_trans"/>
    <property type="match status" value="1"/>
</dbReference>
<dbReference type="InterPro" id="IPR039657">
    <property type="entry name" value="Dimethylallyltransferase"/>
</dbReference>
<dbReference type="InterPro" id="IPR018022">
    <property type="entry name" value="IPT"/>
</dbReference>
<dbReference type="InterPro" id="IPR027417">
    <property type="entry name" value="P-loop_NTPase"/>
</dbReference>
<dbReference type="NCBIfam" id="TIGR00174">
    <property type="entry name" value="miaA"/>
    <property type="match status" value="1"/>
</dbReference>
<dbReference type="PANTHER" id="PTHR11088">
    <property type="entry name" value="TRNA DIMETHYLALLYLTRANSFERASE"/>
    <property type="match status" value="1"/>
</dbReference>
<dbReference type="PANTHER" id="PTHR11088:SF60">
    <property type="entry name" value="TRNA DIMETHYLALLYLTRANSFERASE"/>
    <property type="match status" value="1"/>
</dbReference>
<dbReference type="Pfam" id="PF01715">
    <property type="entry name" value="IPPT"/>
    <property type="match status" value="1"/>
</dbReference>
<dbReference type="SUPFAM" id="SSF52540">
    <property type="entry name" value="P-loop containing nucleoside triphosphate hydrolases"/>
    <property type="match status" value="2"/>
</dbReference>
<evidence type="ECO:0000255" key="1">
    <source>
        <dbReference type="HAMAP-Rule" id="MF_00185"/>
    </source>
</evidence>
<feature type="chain" id="PRO_0000163951" description="tRNA dimethylallyltransferase 1">
    <location>
        <begin position="1"/>
        <end position="300"/>
    </location>
</feature>
<feature type="region of interest" description="Interaction with substrate tRNA" evidence="1">
    <location>
        <begin position="38"/>
        <end position="41"/>
    </location>
</feature>
<feature type="binding site" evidence="1">
    <location>
        <begin position="13"/>
        <end position="20"/>
    </location>
    <ligand>
        <name>ATP</name>
        <dbReference type="ChEBI" id="CHEBI:30616"/>
    </ligand>
</feature>
<feature type="binding site" evidence="1">
    <location>
        <begin position="15"/>
        <end position="20"/>
    </location>
    <ligand>
        <name>substrate</name>
    </ligand>
</feature>
<feature type="site" description="Interaction with substrate tRNA" evidence="1">
    <location>
        <position position="104"/>
    </location>
</feature>
<feature type="site" description="Interaction with substrate tRNA" evidence="1">
    <location>
        <position position="126"/>
    </location>
</feature>
<protein>
    <recommendedName>
        <fullName evidence="1">tRNA dimethylallyltransferase 1</fullName>
        <ecNumber evidence="1">2.5.1.75</ecNumber>
    </recommendedName>
    <alternativeName>
        <fullName evidence="1">Dimethylallyl diphosphate:tRNA dimethylallyltransferase 1</fullName>
        <shortName evidence="1">DMAPP:tRNA dimethylallyltransferase 1</shortName>
        <shortName evidence="1">DMATase 1</shortName>
    </alternativeName>
    <alternativeName>
        <fullName evidence="1">Isopentenyl-diphosphate:tRNA isopentenyltransferase 1</fullName>
        <shortName evidence="1">IPP transferase 1</shortName>
        <shortName evidence="1">IPPT 1</shortName>
        <shortName evidence="1">IPTase 1</shortName>
    </alternativeName>
</protein>
<proteinExistence type="inferred from homology"/>
<organism>
    <name type="scientific">Porphyromonas gingivalis (strain ATCC BAA-308 / W83)</name>
    <dbReference type="NCBI Taxonomy" id="242619"/>
    <lineage>
        <taxon>Bacteria</taxon>
        <taxon>Pseudomonadati</taxon>
        <taxon>Bacteroidota</taxon>
        <taxon>Bacteroidia</taxon>
        <taxon>Bacteroidales</taxon>
        <taxon>Porphyromonadaceae</taxon>
        <taxon>Porphyromonas</taxon>
    </lineage>
</organism>
<accession>Q7MAW8</accession>
<name>MIAA1_PORGI</name>
<gene>
    <name evidence="1" type="primary">miaA1</name>
    <name type="ordered locus">PG_0335</name>
</gene>
<reference key="1">
    <citation type="journal article" date="2003" name="J. Bacteriol.">
        <title>Complete genome sequence of the oral pathogenic bacterium Porphyromonas gingivalis strain W83.</title>
        <authorList>
            <person name="Nelson K.E."/>
            <person name="Fleischmann R.D."/>
            <person name="DeBoy R.T."/>
            <person name="Paulsen I.T."/>
            <person name="Fouts D.E."/>
            <person name="Eisen J.A."/>
            <person name="Daugherty S.C."/>
            <person name="Dodson R.J."/>
            <person name="Durkin A.S."/>
            <person name="Gwinn M.L."/>
            <person name="Haft D.H."/>
            <person name="Kolonay J.F."/>
            <person name="Nelson W.C."/>
            <person name="Mason T.M."/>
            <person name="Tallon L."/>
            <person name="Gray J."/>
            <person name="Granger D."/>
            <person name="Tettelin H."/>
            <person name="Dong H."/>
            <person name="Galvin J.L."/>
            <person name="Duncan M.J."/>
            <person name="Dewhirst F.E."/>
            <person name="Fraser C.M."/>
        </authorList>
    </citation>
    <scope>NUCLEOTIDE SEQUENCE [LARGE SCALE GENOMIC DNA]</scope>
    <source>
        <strain>ATCC BAA-308 / W83</strain>
    </source>
</reference>